<feature type="chain" id="PRO_0000332544" description="Phospho-N-acetylmuramoyl-pentapeptide-transferase">
    <location>
        <begin position="1"/>
        <end position="358"/>
    </location>
</feature>
<feature type="transmembrane region" description="Helical" evidence="1">
    <location>
        <begin position="19"/>
        <end position="39"/>
    </location>
</feature>
<feature type="transmembrane region" description="Helical" evidence="1">
    <location>
        <begin position="71"/>
        <end position="91"/>
    </location>
</feature>
<feature type="transmembrane region" description="Helical" evidence="1">
    <location>
        <begin position="95"/>
        <end position="115"/>
    </location>
</feature>
<feature type="transmembrane region" description="Helical" evidence="1">
    <location>
        <begin position="126"/>
        <end position="146"/>
    </location>
</feature>
<feature type="transmembrane region" description="Helical" evidence="1">
    <location>
        <begin position="166"/>
        <end position="186"/>
    </location>
</feature>
<feature type="transmembrane region" description="Helical" evidence="1">
    <location>
        <begin position="194"/>
        <end position="214"/>
    </location>
</feature>
<feature type="transmembrane region" description="Helical" evidence="1">
    <location>
        <begin position="237"/>
        <end position="257"/>
    </location>
</feature>
<feature type="transmembrane region" description="Helical" evidence="1">
    <location>
        <begin position="261"/>
        <end position="281"/>
    </location>
</feature>
<feature type="transmembrane region" description="Helical" evidence="1">
    <location>
        <begin position="286"/>
        <end position="306"/>
    </location>
</feature>
<feature type="transmembrane region" description="Helical" evidence="1">
    <location>
        <begin position="336"/>
        <end position="356"/>
    </location>
</feature>
<accession>Q15Q14</accession>
<organism>
    <name type="scientific">Pseudoalteromonas atlantica (strain T6c / ATCC BAA-1087)</name>
    <dbReference type="NCBI Taxonomy" id="3042615"/>
    <lineage>
        <taxon>Bacteria</taxon>
        <taxon>Pseudomonadati</taxon>
        <taxon>Pseudomonadota</taxon>
        <taxon>Gammaproteobacteria</taxon>
        <taxon>Alteromonadales</taxon>
        <taxon>Alteromonadaceae</taxon>
        <taxon>Paraglaciecola</taxon>
    </lineage>
</organism>
<comment type="function">
    <text evidence="1">Catalyzes the initial step of the lipid cycle reactions in the biosynthesis of the cell wall peptidoglycan: transfers peptidoglycan precursor phospho-MurNAc-pentapeptide from UDP-MurNAc-pentapeptide onto the lipid carrier undecaprenyl phosphate, yielding undecaprenyl-pyrophosphoryl-MurNAc-pentapeptide, known as lipid I.</text>
</comment>
<comment type="catalytic activity">
    <reaction evidence="1">
        <text>UDP-N-acetyl-alpha-D-muramoyl-L-alanyl-gamma-D-glutamyl-meso-2,6-diaminopimeloyl-D-alanyl-D-alanine + di-trans,octa-cis-undecaprenyl phosphate = di-trans,octa-cis-undecaprenyl diphospho-N-acetyl-alpha-D-muramoyl-L-alanyl-D-glutamyl-meso-2,6-diaminopimeloyl-D-alanyl-D-alanine + UMP</text>
        <dbReference type="Rhea" id="RHEA:28386"/>
        <dbReference type="ChEBI" id="CHEBI:57865"/>
        <dbReference type="ChEBI" id="CHEBI:60392"/>
        <dbReference type="ChEBI" id="CHEBI:61386"/>
        <dbReference type="ChEBI" id="CHEBI:61387"/>
        <dbReference type="EC" id="2.7.8.13"/>
    </reaction>
</comment>
<comment type="cofactor">
    <cofactor evidence="1">
        <name>Mg(2+)</name>
        <dbReference type="ChEBI" id="CHEBI:18420"/>
    </cofactor>
</comment>
<comment type="pathway">
    <text evidence="1">Cell wall biogenesis; peptidoglycan biosynthesis.</text>
</comment>
<comment type="subcellular location">
    <subcellularLocation>
        <location evidence="1">Cell inner membrane</location>
        <topology evidence="1">Multi-pass membrane protein</topology>
    </subcellularLocation>
</comment>
<comment type="similarity">
    <text evidence="1">Belongs to the glycosyltransferase 4 family. MraY subfamily.</text>
</comment>
<dbReference type="EC" id="2.7.8.13" evidence="1"/>
<dbReference type="EMBL" id="CP000388">
    <property type="protein sequence ID" value="ABG42024.1"/>
    <property type="molecule type" value="Genomic_DNA"/>
</dbReference>
<dbReference type="SMR" id="Q15Q14"/>
<dbReference type="STRING" id="342610.Patl_3522"/>
<dbReference type="KEGG" id="pat:Patl_3522"/>
<dbReference type="eggNOG" id="COG0472">
    <property type="taxonomic scope" value="Bacteria"/>
</dbReference>
<dbReference type="HOGENOM" id="CLU_023982_0_0_6"/>
<dbReference type="UniPathway" id="UPA00219"/>
<dbReference type="Proteomes" id="UP000001981">
    <property type="component" value="Chromosome"/>
</dbReference>
<dbReference type="GO" id="GO:0005886">
    <property type="term" value="C:plasma membrane"/>
    <property type="evidence" value="ECO:0007669"/>
    <property type="project" value="UniProtKB-SubCell"/>
</dbReference>
<dbReference type="GO" id="GO:0046872">
    <property type="term" value="F:metal ion binding"/>
    <property type="evidence" value="ECO:0007669"/>
    <property type="project" value="UniProtKB-KW"/>
</dbReference>
<dbReference type="GO" id="GO:0008963">
    <property type="term" value="F:phospho-N-acetylmuramoyl-pentapeptide-transferase activity"/>
    <property type="evidence" value="ECO:0007669"/>
    <property type="project" value="UniProtKB-UniRule"/>
</dbReference>
<dbReference type="GO" id="GO:0051992">
    <property type="term" value="F:UDP-N-acetylmuramoyl-L-alanyl-D-glutamyl-meso-2,6-diaminopimelyl-D-alanyl-D-alanine:undecaprenyl-phosphate transferase activity"/>
    <property type="evidence" value="ECO:0007669"/>
    <property type="project" value="RHEA"/>
</dbReference>
<dbReference type="GO" id="GO:0051301">
    <property type="term" value="P:cell division"/>
    <property type="evidence" value="ECO:0007669"/>
    <property type="project" value="UniProtKB-KW"/>
</dbReference>
<dbReference type="GO" id="GO:0071555">
    <property type="term" value="P:cell wall organization"/>
    <property type="evidence" value="ECO:0007669"/>
    <property type="project" value="UniProtKB-KW"/>
</dbReference>
<dbReference type="GO" id="GO:0009252">
    <property type="term" value="P:peptidoglycan biosynthetic process"/>
    <property type="evidence" value="ECO:0007669"/>
    <property type="project" value="UniProtKB-UniRule"/>
</dbReference>
<dbReference type="GO" id="GO:0008360">
    <property type="term" value="P:regulation of cell shape"/>
    <property type="evidence" value="ECO:0007669"/>
    <property type="project" value="UniProtKB-KW"/>
</dbReference>
<dbReference type="CDD" id="cd06852">
    <property type="entry name" value="GT_MraY"/>
    <property type="match status" value="1"/>
</dbReference>
<dbReference type="HAMAP" id="MF_00038">
    <property type="entry name" value="MraY"/>
    <property type="match status" value="1"/>
</dbReference>
<dbReference type="InterPro" id="IPR000715">
    <property type="entry name" value="Glycosyl_transferase_4"/>
</dbReference>
<dbReference type="InterPro" id="IPR003524">
    <property type="entry name" value="PNAcMuramoyl-5peptid_Trfase"/>
</dbReference>
<dbReference type="InterPro" id="IPR018480">
    <property type="entry name" value="PNAcMuramoyl-5peptid_Trfase_CS"/>
</dbReference>
<dbReference type="NCBIfam" id="TIGR00445">
    <property type="entry name" value="mraY"/>
    <property type="match status" value="1"/>
</dbReference>
<dbReference type="PANTHER" id="PTHR22926">
    <property type="entry name" value="PHOSPHO-N-ACETYLMURAMOYL-PENTAPEPTIDE-TRANSFERASE"/>
    <property type="match status" value="1"/>
</dbReference>
<dbReference type="PANTHER" id="PTHR22926:SF5">
    <property type="entry name" value="PHOSPHO-N-ACETYLMURAMOYL-PENTAPEPTIDE-TRANSFERASE HOMOLOG"/>
    <property type="match status" value="1"/>
</dbReference>
<dbReference type="Pfam" id="PF00953">
    <property type="entry name" value="Glycos_transf_4"/>
    <property type="match status" value="1"/>
</dbReference>
<dbReference type="Pfam" id="PF10555">
    <property type="entry name" value="MraY_sig1"/>
    <property type="match status" value="1"/>
</dbReference>
<dbReference type="PROSITE" id="PS01347">
    <property type="entry name" value="MRAY_1"/>
    <property type="match status" value="1"/>
</dbReference>
<dbReference type="PROSITE" id="PS01348">
    <property type="entry name" value="MRAY_2"/>
    <property type="match status" value="1"/>
</dbReference>
<keyword id="KW-0131">Cell cycle</keyword>
<keyword id="KW-0132">Cell division</keyword>
<keyword id="KW-0997">Cell inner membrane</keyword>
<keyword id="KW-1003">Cell membrane</keyword>
<keyword id="KW-0133">Cell shape</keyword>
<keyword id="KW-0961">Cell wall biogenesis/degradation</keyword>
<keyword id="KW-0460">Magnesium</keyword>
<keyword id="KW-0472">Membrane</keyword>
<keyword id="KW-0479">Metal-binding</keyword>
<keyword id="KW-0573">Peptidoglycan synthesis</keyword>
<keyword id="KW-0808">Transferase</keyword>
<keyword id="KW-0812">Transmembrane</keyword>
<keyword id="KW-1133">Transmembrane helix</keyword>
<sequence length="358" mass="39535">MLLADWLQQFEPSFRVFSYLTLRAILSTLTALLIAVLIGPRMIRWLQTMQIGQTVRDDGPQSHLAKSGTPTMGGLLILAAIVVSVLLWADLTNRYVWVTLSVVVGYGIIGFIDDYRKVVRKDPKGLIARWKYFWQSVIAIGVALYLYASQQDPAETALLVPFFKDVMPQMGMFFVVMTYFVIVGTSNAVNLTDGLDGLAIVPTVLVAGAFAIFAYTTGNINFSAYLNIPYLPLTSELVIVCTAIVGAGLGFLWFNTYPAMVFMGDVGSLALGGTLGIIAVLVRQEIVLVIMGGVFVVETLSVILQVGSFKLRGQRIFRMAPIHHHYELKGWPEPRVIVRFWIISIILVLVGLATLKLR</sequence>
<protein>
    <recommendedName>
        <fullName evidence="1">Phospho-N-acetylmuramoyl-pentapeptide-transferase</fullName>
        <ecNumber evidence="1">2.7.8.13</ecNumber>
    </recommendedName>
    <alternativeName>
        <fullName evidence="1">UDP-MurNAc-pentapeptide phosphotransferase</fullName>
    </alternativeName>
</protein>
<proteinExistence type="inferred from homology"/>
<name>MRAY_PSEA6</name>
<reference key="1">
    <citation type="submission" date="2006-06" db="EMBL/GenBank/DDBJ databases">
        <title>Complete sequence of Pseudoalteromonas atlantica T6c.</title>
        <authorList>
            <consortium name="US DOE Joint Genome Institute"/>
            <person name="Copeland A."/>
            <person name="Lucas S."/>
            <person name="Lapidus A."/>
            <person name="Barry K."/>
            <person name="Detter J.C."/>
            <person name="Glavina del Rio T."/>
            <person name="Hammon N."/>
            <person name="Israni S."/>
            <person name="Dalin E."/>
            <person name="Tice H."/>
            <person name="Pitluck S."/>
            <person name="Saunders E."/>
            <person name="Brettin T."/>
            <person name="Bruce D."/>
            <person name="Han C."/>
            <person name="Tapia R."/>
            <person name="Gilna P."/>
            <person name="Schmutz J."/>
            <person name="Larimer F."/>
            <person name="Land M."/>
            <person name="Hauser L."/>
            <person name="Kyrpides N."/>
            <person name="Kim E."/>
            <person name="Karls A.C."/>
            <person name="Bartlett D."/>
            <person name="Higgins B.P."/>
            <person name="Richardson P."/>
        </authorList>
    </citation>
    <scope>NUCLEOTIDE SEQUENCE [LARGE SCALE GENOMIC DNA]</scope>
    <source>
        <strain>T6c / ATCC BAA-1087</strain>
    </source>
</reference>
<gene>
    <name evidence="1" type="primary">mraY</name>
    <name type="ordered locus">Patl_3522</name>
</gene>
<evidence type="ECO:0000255" key="1">
    <source>
        <dbReference type="HAMAP-Rule" id="MF_00038"/>
    </source>
</evidence>